<dbReference type="EC" id="3.4.11.5"/>
<dbReference type="EMBL" id="U00089">
    <property type="protein sequence ID" value="AAB95780.1"/>
    <property type="molecule type" value="Genomic_DNA"/>
</dbReference>
<dbReference type="PIR" id="S73458">
    <property type="entry name" value="S73458"/>
</dbReference>
<dbReference type="RefSeq" id="NP_109710.1">
    <property type="nucleotide sequence ID" value="NC_000912.1"/>
</dbReference>
<dbReference type="RefSeq" id="WP_010874379.1">
    <property type="nucleotide sequence ID" value="NZ_OU342337.1"/>
</dbReference>
<dbReference type="SMR" id="P75092"/>
<dbReference type="IntAct" id="P75092">
    <property type="interactions" value="4"/>
</dbReference>
<dbReference type="STRING" id="272634.MPN_022"/>
<dbReference type="ESTHER" id="mycpn-pip">
    <property type="family name" value="Proline_iminopeptidase"/>
</dbReference>
<dbReference type="MEROPS" id="S33.001"/>
<dbReference type="EnsemblBacteria" id="AAB95780">
    <property type="protein sequence ID" value="AAB95780"/>
    <property type="gene ID" value="MPN_022"/>
</dbReference>
<dbReference type="GeneID" id="66609337"/>
<dbReference type="KEGG" id="mpn:MPN_022"/>
<dbReference type="PATRIC" id="fig|272634.6.peg.21"/>
<dbReference type="HOGENOM" id="CLU_043739_2_2_14"/>
<dbReference type="OrthoDB" id="53505at2"/>
<dbReference type="BioCyc" id="MPNE272634:G1GJ3-33-MONOMER"/>
<dbReference type="Proteomes" id="UP000000808">
    <property type="component" value="Chromosome"/>
</dbReference>
<dbReference type="GO" id="GO:0005737">
    <property type="term" value="C:cytoplasm"/>
    <property type="evidence" value="ECO:0007669"/>
    <property type="project" value="UniProtKB-SubCell"/>
</dbReference>
<dbReference type="GO" id="GO:0004177">
    <property type="term" value="F:aminopeptidase activity"/>
    <property type="evidence" value="ECO:0007669"/>
    <property type="project" value="UniProtKB-KW"/>
</dbReference>
<dbReference type="GO" id="GO:0006508">
    <property type="term" value="P:proteolysis"/>
    <property type="evidence" value="ECO:0007669"/>
    <property type="project" value="UniProtKB-KW"/>
</dbReference>
<dbReference type="Gene3D" id="3.40.50.1820">
    <property type="entry name" value="alpha/beta hydrolase"/>
    <property type="match status" value="1"/>
</dbReference>
<dbReference type="InterPro" id="IPR000073">
    <property type="entry name" value="AB_hydrolase_1"/>
</dbReference>
<dbReference type="InterPro" id="IPR029058">
    <property type="entry name" value="AB_hydrolase_fold"/>
</dbReference>
<dbReference type="InterPro" id="IPR002410">
    <property type="entry name" value="Peptidase_S33"/>
</dbReference>
<dbReference type="InterPro" id="IPR005944">
    <property type="entry name" value="Pro_iminopeptidase"/>
</dbReference>
<dbReference type="NCBIfam" id="TIGR01249">
    <property type="entry name" value="pro_imino_pep_1"/>
    <property type="match status" value="1"/>
</dbReference>
<dbReference type="PANTHER" id="PTHR43722">
    <property type="entry name" value="PROLINE IMINOPEPTIDASE"/>
    <property type="match status" value="1"/>
</dbReference>
<dbReference type="PANTHER" id="PTHR43722:SF1">
    <property type="entry name" value="PROLINE IMINOPEPTIDASE"/>
    <property type="match status" value="1"/>
</dbReference>
<dbReference type="Pfam" id="PF00561">
    <property type="entry name" value="Abhydrolase_1"/>
    <property type="match status" value="1"/>
</dbReference>
<dbReference type="PIRSF" id="PIRSF006431">
    <property type="entry name" value="Pept_S33"/>
    <property type="match status" value="1"/>
</dbReference>
<dbReference type="PRINTS" id="PR00793">
    <property type="entry name" value="PROAMNOPTASE"/>
</dbReference>
<dbReference type="SUPFAM" id="SSF53474">
    <property type="entry name" value="alpha/beta-Hydrolases"/>
    <property type="match status" value="1"/>
</dbReference>
<name>PIP_MYCPN</name>
<comment type="function">
    <text evidence="1">Specifically catalyzes the removal of N-terminal proline residues from peptides.</text>
</comment>
<comment type="catalytic activity">
    <reaction>
        <text>Release of N-terminal proline from a peptide.</text>
        <dbReference type="EC" id="3.4.11.5"/>
    </reaction>
</comment>
<comment type="subcellular location">
    <subcellularLocation>
        <location evidence="1">Cytoplasm</location>
    </subcellularLocation>
</comment>
<comment type="similarity">
    <text evidence="3">Belongs to the peptidase S33 family.</text>
</comment>
<proteinExistence type="inferred from homology"/>
<reference key="1">
    <citation type="journal article" date="1996" name="Nucleic Acids Res.">
        <title>Complete sequence analysis of the genome of the bacterium Mycoplasma pneumoniae.</title>
        <authorList>
            <person name="Himmelreich R."/>
            <person name="Hilbert H."/>
            <person name="Plagens H."/>
            <person name="Pirkl E."/>
            <person name="Li B.-C."/>
            <person name="Herrmann R."/>
        </authorList>
    </citation>
    <scope>NUCLEOTIDE SEQUENCE [LARGE SCALE GENOMIC DNA]</scope>
    <source>
        <strain>ATCC 29342 / M129 / Subtype 1</strain>
    </source>
</reference>
<keyword id="KW-0031">Aminopeptidase</keyword>
<keyword id="KW-0963">Cytoplasm</keyword>
<keyword id="KW-0378">Hydrolase</keyword>
<keyword id="KW-0645">Protease</keyword>
<keyword id="KW-1185">Reference proteome</keyword>
<protein>
    <recommendedName>
        <fullName>Putative proline iminopeptidase</fullName>
        <shortName>PIP</shortName>
        <ecNumber>3.4.11.5</ecNumber>
    </recommendedName>
    <alternativeName>
        <fullName>Prolyl aminopeptidase</fullName>
        <shortName>PAP</shortName>
    </alternativeName>
</protein>
<feature type="chain" id="PRO_0000080840" description="Putative proline iminopeptidase">
    <location>
        <begin position="1"/>
        <end position="309"/>
    </location>
</feature>
<feature type="domain" description="AB hydrolase-1" evidence="2">
    <location>
        <begin position="33"/>
        <end position="291"/>
    </location>
</feature>
<feature type="active site" description="Nucleophile" evidence="1">
    <location>
        <position position="105"/>
    </location>
</feature>
<feature type="active site" evidence="1">
    <location>
        <position position="262"/>
    </location>
</feature>
<feature type="active site" description="Proton donor" evidence="1">
    <location>
        <position position="290"/>
    </location>
</feature>
<accession>P75092</accession>
<organism>
    <name type="scientific">Mycoplasma pneumoniae (strain ATCC 29342 / M129 / Subtype 1)</name>
    <name type="common">Mycoplasmoides pneumoniae</name>
    <dbReference type="NCBI Taxonomy" id="272634"/>
    <lineage>
        <taxon>Bacteria</taxon>
        <taxon>Bacillati</taxon>
        <taxon>Mycoplasmatota</taxon>
        <taxon>Mycoplasmoidales</taxon>
        <taxon>Mycoplasmoidaceae</taxon>
        <taxon>Mycoplasmoides</taxon>
    </lineage>
</organism>
<sequence length="309" mass="34690">MNTSPKQSGYLKVGNGHEVYFWTAGNPQGKSALYVHGGPGSGTDAGCLKYFDLDTTYVILLDQRGCGQSKAVNPLLHNTTQDLVGDLEALRQHLKLERWTLFGGSWGSTLALVYAITHPQVVEQVFLRALFLGREQDWAEMLLGLGKLFYPYEHQTLLKAIPQACRTDFTKFTNYFYEVLQGNDSALKTQLANAWVKWENTLLSPISYVKDEKAEDANFTFKLALLECHYAKHHSFLKPNFILENVAVLKDKPVHLIHGRFDLVCPLSQALELKRALPTLNLYVTNNAGHSGSDPNNLTTIKHLLKTQL</sequence>
<evidence type="ECO:0000250" key="1"/>
<evidence type="ECO:0000255" key="2"/>
<evidence type="ECO:0000305" key="3"/>
<gene>
    <name type="primary">pip</name>
    <name type="ordered locus">MPN_022</name>
    <name type="ORF">MP132</name>
</gene>